<accession>P0AE62</accession>
<accession>P76211</accession>
<name>CEDA_SHIFL</name>
<feature type="chain" id="PRO_0000089473" description="Cell division activator CedA">
    <location>
        <begin position="1"/>
        <end position="80"/>
    </location>
</feature>
<keyword id="KW-0131">Cell cycle</keyword>
<keyword id="KW-0132">Cell division</keyword>
<keyword id="KW-0238">DNA-binding</keyword>
<keyword id="KW-1185">Reference proteome</keyword>
<gene>
    <name evidence="1" type="primary">cedA</name>
    <name type="ordered locus">SF1497</name>
    <name type="ordered locus">S1614</name>
</gene>
<evidence type="ECO:0000255" key="1">
    <source>
        <dbReference type="HAMAP-Rule" id="MF_01580"/>
    </source>
</evidence>
<evidence type="ECO:0000305" key="2"/>
<dbReference type="EMBL" id="AE005674">
    <property type="protein sequence ID" value="AAN43088.2"/>
    <property type="status" value="ALT_INIT"/>
    <property type="molecule type" value="Genomic_DNA"/>
</dbReference>
<dbReference type="EMBL" id="AE014073">
    <property type="protein sequence ID" value="AAP16980.1"/>
    <property type="status" value="ALT_INIT"/>
    <property type="molecule type" value="Genomic_DNA"/>
</dbReference>
<dbReference type="RefSeq" id="NP_707381.2">
    <property type="nucleotide sequence ID" value="NC_004337.2"/>
</dbReference>
<dbReference type="SMR" id="P0AE62"/>
<dbReference type="STRING" id="198214.SF1497"/>
<dbReference type="PaxDb" id="198214-SF1497"/>
<dbReference type="GeneID" id="1024686"/>
<dbReference type="KEGG" id="sfl:SF1497"/>
<dbReference type="KEGG" id="sfx:S1614"/>
<dbReference type="PATRIC" id="fig|198214.7.peg.1767"/>
<dbReference type="HOGENOM" id="CLU_167445_0_0_6"/>
<dbReference type="Proteomes" id="UP000001006">
    <property type="component" value="Chromosome"/>
</dbReference>
<dbReference type="Proteomes" id="UP000002673">
    <property type="component" value="Chromosome"/>
</dbReference>
<dbReference type="GO" id="GO:0003677">
    <property type="term" value="F:DNA binding"/>
    <property type="evidence" value="ECO:0007669"/>
    <property type="project" value="UniProtKB-UniRule"/>
</dbReference>
<dbReference type="GO" id="GO:0051301">
    <property type="term" value="P:cell division"/>
    <property type="evidence" value="ECO:0007669"/>
    <property type="project" value="UniProtKB-UniRule"/>
</dbReference>
<dbReference type="FunFam" id="3.30.730.20:FF:000001">
    <property type="entry name" value="Cell division activator CedA"/>
    <property type="match status" value="1"/>
</dbReference>
<dbReference type="Gene3D" id="3.30.730.20">
    <property type="entry name" value="Cell division activator CedA"/>
    <property type="match status" value="1"/>
</dbReference>
<dbReference type="HAMAP" id="MF_01580">
    <property type="entry name" value="CedA"/>
    <property type="match status" value="1"/>
</dbReference>
<dbReference type="InterPro" id="IPR038463">
    <property type="entry name" value="CedA-like_sf"/>
</dbReference>
<dbReference type="InterPro" id="IPR019666">
    <property type="entry name" value="Cell_div_activator_CedA"/>
</dbReference>
<dbReference type="NCBIfam" id="NF007510">
    <property type="entry name" value="PRK10113.1"/>
    <property type="match status" value="1"/>
</dbReference>
<dbReference type="Pfam" id="PF10729">
    <property type="entry name" value="CedA"/>
    <property type="match status" value="1"/>
</dbReference>
<sequence length="80" mass="9377">MKKPLRQQNRQIISYVPRTEPAPPEHAIKMDSFRDVWMLRGKYVAFVLMGESFLRSPAFTVPESAQRWANQIRQEGEVTE</sequence>
<organism>
    <name type="scientific">Shigella flexneri</name>
    <dbReference type="NCBI Taxonomy" id="623"/>
    <lineage>
        <taxon>Bacteria</taxon>
        <taxon>Pseudomonadati</taxon>
        <taxon>Pseudomonadota</taxon>
        <taxon>Gammaproteobacteria</taxon>
        <taxon>Enterobacterales</taxon>
        <taxon>Enterobacteriaceae</taxon>
        <taxon>Shigella</taxon>
    </lineage>
</organism>
<comment type="function">
    <text evidence="1">Activates the cell division inhibited by chromosomal DNA over-replication.</text>
</comment>
<comment type="similarity">
    <text evidence="1">Belongs to the CedA family.</text>
</comment>
<comment type="sequence caution" evidence="2">
    <conflict type="erroneous initiation">
        <sequence resource="EMBL-CDS" id="AAN43088"/>
    </conflict>
</comment>
<comment type="sequence caution" evidence="2">
    <conflict type="erroneous initiation">
        <sequence resource="EMBL-CDS" id="AAP16980"/>
    </conflict>
</comment>
<proteinExistence type="inferred from homology"/>
<reference key="1">
    <citation type="journal article" date="2002" name="Nucleic Acids Res.">
        <title>Genome sequence of Shigella flexneri 2a: insights into pathogenicity through comparison with genomes of Escherichia coli K12 and O157.</title>
        <authorList>
            <person name="Jin Q."/>
            <person name="Yuan Z."/>
            <person name="Xu J."/>
            <person name="Wang Y."/>
            <person name="Shen Y."/>
            <person name="Lu W."/>
            <person name="Wang J."/>
            <person name="Liu H."/>
            <person name="Yang J."/>
            <person name="Yang F."/>
            <person name="Zhang X."/>
            <person name="Zhang J."/>
            <person name="Yang G."/>
            <person name="Wu H."/>
            <person name="Qu D."/>
            <person name="Dong J."/>
            <person name="Sun L."/>
            <person name="Xue Y."/>
            <person name="Zhao A."/>
            <person name="Gao Y."/>
            <person name="Zhu J."/>
            <person name="Kan B."/>
            <person name="Ding K."/>
            <person name="Chen S."/>
            <person name="Cheng H."/>
            <person name="Yao Z."/>
            <person name="He B."/>
            <person name="Chen R."/>
            <person name="Ma D."/>
            <person name="Qiang B."/>
            <person name="Wen Y."/>
            <person name="Hou Y."/>
            <person name="Yu J."/>
        </authorList>
    </citation>
    <scope>NUCLEOTIDE SEQUENCE [LARGE SCALE GENOMIC DNA]</scope>
    <source>
        <strain>301 / Serotype 2a</strain>
    </source>
</reference>
<reference key="2">
    <citation type="journal article" date="2003" name="Infect. Immun.">
        <title>Complete genome sequence and comparative genomics of Shigella flexneri serotype 2a strain 2457T.</title>
        <authorList>
            <person name="Wei J."/>
            <person name="Goldberg M.B."/>
            <person name="Burland V."/>
            <person name="Venkatesan M.M."/>
            <person name="Deng W."/>
            <person name="Fournier G."/>
            <person name="Mayhew G.F."/>
            <person name="Plunkett G. III"/>
            <person name="Rose D.J."/>
            <person name="Darling A."/>
            <person name="Mau B."/>
            <person name="Perna N.T."/>
            <person name="Payne S.M."/>
            <person name="Runyen-Janecky L.J."/>
            <person name="Zhou S."/>
            <person name="Schwartz D.C."/>
            <person name="Blattner F.R."/>
        </authorList>
    </citation>
    <scope>NUCLEOTIDE SEQUENCE [LARGE SCALE GENOMIC DNA]</scope>
    <source>
        <strain>ATCC 700930 / 2457T / Serotype 2a</strain>
    </source>
</reference>
<protein>
    <recommendedName>
        <fullName evidence="1">Cell division activator CedA</fullName>
    </recommendedName>
</protein>